<name>IF1_JANSC</name>
<protein>
    <recommendedName>
        <fullName evidence="1">Translation initiation factor IF-1</fullName>
    </recommendedName>
</protein>
<accession>Q28NC3</accession>
<keyword id="KW-0963">Cytoplasm</keyword>
<keyword id="KW-0396">Initiation factor</keyword>
<keyword id="KW-0648">Protein biosynthesis</keyword>
<keyword id="KW-1185">Reference proteome</keyword>
<keyword id="KW-0694">RNA-binding</keyword>
<keyword id="KW-0699">rRNA-binding</keyword>
<comment type="function">
    <text evidence="1">One of the essential components for the initiation of protein synthesis. Stabilizes the binding of IF-2 and IF-3 on the 30S subunit to which N-formylmethionyl-tRNA(fMet) subsequently binds. Helps modulate mRNA selection, yielding the 30S pre-initiation complex (PIC). Upon addition of the 50S ribosomal subunit IF-1, IF-2 and IF-3 are released leaving the mature 70S translation initiation complex.</text>
</comment>
<comment type="subunit">
    <text evidence="1">Component of the 30S ribosomal translation pre-initiation complex which assembles on the 30S ribosome in the order IF-2 and IF-3, IF-1 and N-formylmethionyl-tRNA(fMet); mRNA recruitment can occur at any time during PIC assembly.</text>
</comment>
<comment type="subcellular location">
    <subcellularLocation>
        <location evidence="1">Cytoplasm</location>
    </subcellularLocation>
</comment>
<comment type="similarity">
    <text evidence="1">Belongs to the IF-1 family.</text>
</comment>
<dbReference type="EMBL" id="CP000264">
    <property type="protein sequence ID" value="ABD55789.1"/>
    <property type="molecule type" value="Genomic_DNA"/>
</dbReference>
<dbReference type="RefSeq" id="WP_011455993.1">
    <property type="nucleotide sequence ID" value="NC_007802.1"/>
</dbReference>
<dbReference type="SMR" id="Q28NC3"/>
<dbReference type="STRING" id="290400.Jann_2872"/>
<dbReference type="GeneID" id="80816481"/>
<dbReference type="KEGG" id="jan:Jann_2872"/>
<dbReference type="eggNOG" id="COG0361">
    <property type="taxonomic scope" value="Bacteria"/>
</dbReference>
<dbReference type="HOGENOM" id="CLU_151267_1_0_5"/>
<dbReference type="OrthoDB" id="9803250at2"/>
<dbReference type="Proteomes" id="UP000008326">
    <property type="component" value="Chromosome"/>
</dbReference>
<dbReference type="GO" id="GO:0005829">
    <property type="term" value="C:cytosol"/>
    <property type="evidence" value="ECO:0007669"/>
    <property type="project" value="TreeGrafter"/>
</dbReference>
<dbReference type="GO" id="GO:0043022">
    <property type="term" value="F:ribosome binding"/>
    <property type="evidence" value="ECO:0007669"/>
    <property type="project" value="UniProtKB-UniRule"/>
</dbReference>
<dbReference type="GO" id="GO:0019843">
    <property type="term" value="F:rRNA binding"/>
    <property type="evidence" value="ECO:0007669"/>
    <property type="project" value="UniProtKB-UniRule"/>
</dbReference>
<dbReference type="GO" id="GO:0003743">
    <property type="term" value="F:translation initiation factor activity"/>
    <property type="evidence" value="ECO:0007669"/>
    <property type="project" value="UniProtKB-UniRule"/>
</dbReference>
<dbReference type="CDD" id="cd04451">
    <property type="entry name" value="S1_IF1"/>
    <property type="match status" value="1"/>
</dbReference>
<dbReference type="FunFam" id="2.40.50.140:FF:000002">
    <property type="entry name" value="Translation initiation factor IF-1"/>
    <property type="match status" value="1"/>
</dbReference>
<dbReference type="Gene3D" id="2.40.50.140">
    <property type="entry name" value="Nucleic acid-binding proteins"/>
    <property type="match status" value="1"/>
</dbReference>
<dbReference type="HAMAP" id="MF_00075">
    <property type="entry name" value="IF_1"/>
    <property type="match status" value="1"/>
</dbReference>
<dbReference type="InterPro" id="IPR012340">
    <property type="entry name" value="NA-bd_OB-fold"/>
</dbReference>
<dbReference type="InterPro" id="IPR006196">
    <property type="entry name" value="RNA-binding_domain_S1_IF1"/>
</dbReference>
<dbReference type="InterPro" id="IPR003029">
    <property type="entry name" value="S1_domain"/>
</dbReference>
<dbReference type="InterPro" id="IPR004368">
    <property type="entry name" value="TIF_IF1"/>
</dbReference>
<dbReference type="NCBIfam" id="TIGR00008">
    <property type="entry name" value="infA"/>
    <property type="match status" value="1"/>
</dbReference>
<dbReference type="PANTHER" id="PTHR33370">
    <property type="entry name" value="TRANSLATION INITIATION FACTOR IF-1, CHLOROPLASTIC"/>
    <property type="match status" value="1"/>
</dbReference>
<dbReference type="PANTHER" id="PTHR33370:SF1">
    <property type="entry name" value="TRANSLATION INITIATION FACTOR IF-1, CHLOROPLASTIC"/>
    <property type="match status" value="1"/>
</dbReference>
<dbReference type="Pfam" id="PF01176">
    <property type="entry name" value="eIF-1a"/>
    <property type="match status" value="1"/>
</dbReference>
<dbReference type="SMART" id="SM00316">
    <property type="entry name" value="S1"/>
    <property type="match status" value="1"/>
</dbReference>
<dbReference type="SUPFAM" id="SSF50249">
    <property type="entry name" value="Nucleic acid-binding proteins"/>
    <property type="match status" value="1"/>
</dbReference>
<dbReference type="PROSITE" id="PS50832">
    <property type="entry name" value="S1_IF1_TYPE"/>
    <property type="match status" value="1"/>
</dbReference>
<reference key="1">
    <citation type="submission" date="2006-02" db="EMBL/GenBank/DDBJ databases">
        <title>Complete sequence of chromosome of Jannaschia sp. CCS1.</title>
        <authorList>
            <consortium name="US DOE Joint Genome Institute"/>
            <person name="Copeland A."/>
            <person name="Lucas S."/>
            <person name="Lapidus A."/>
            <person name="Barry K."/>
            <person name="Detter J.C."/>
            <person name="Glavina del Rio T."/>
            <person name="Hammon N."/>
            <person name="Israni S."/>
            <person name="Pitluck S."/>
            <person name="Brettin T."/>
            <person name="Bruce D."/>
            <person name="Han C."/>
            <person name="Tapia R."/>
            <person name="Gilna P."/>
            <person name="Chertkov O."/>
            <person name="Saunders E."/>
            <person name="Schmutz J."/>
            <person name="Larimer F."/>
            <person name="Land M."/>
            <person name="Kyrpides N."/>
            <person name="Lykidis A."/>
            <person name="Moran M.A."/>
            <person name="Belas R."/>
            <person name="Ye W."/>
            <person name="Buchan A."/>
            <person name="Gonzalez J.M."/>
            <person name="Schell M.A."/>
            <person name="Richardson P."/>
        </authorList>
    </citation>
    <scope>NUCLEOTIDE SEQUENCE [LARGE SCALE GENOMIC DNA]</scope>
    <source>
        <strain>CCS1</strain>
    </source>
</reference>
<organism>
    <name type="scientific">Jannaschia sp. (strain CCS1)</name>
    <dbReference type="NCBI Taxonomy" id="290400"/>
    <lineage>
        <taxon>Bacteria</taxon>
        <taxon>Pseudomonadati</taxon>
        <taxon>Pseudomonadota</taxon>
        <taxon>Alphaproteobacteria</taxon>
        <taxon>Rhodobacterales</taxon>
        <taxon>Roseobacteraceae</taxon>
        <taxon>Jannaschia</taxon>
    </lineage>
</organism>
<sequence length="72" mass="8330">MAKEEMLEFPGVVKELLPNATFRVELENGHEIIAHTAGKMRKNRIRVLAGDKVQVEMTPYDLTKGRINYRFK</sequence>
<evidence type="ECO:0000255" key="1">
    <source>
        <dbReference type="HAMAP-Rule" id="MF_00075"/>
    </source>
</evidence>
<feature type="chain" id="PRO_0000263812" description="Translation initiation factor IF-1">
    <location>
        <begin position="1"/>
        <end position="72"/>
    </location>
</feature>
<feature type="domain" description="S1-like" evidence="1">
    <location>
        <begin position="1"/>
        <end position="72"/>
    </location>
</feature>
<gene>
    <name evidence="1" type="primary">infA</name>
    <name type="ordered locus">Jann_2872</name>
</gene>
<proteinExistence type="inferred from homology"/>